<comment type="function">
    <text evidence="1">With S4 and S5 plays an important role in translational accuracy. Located at the interface of the 30S and 50S subunits (By similarity).</text>
</comment>
<comment type="subunit">
    <text>Part of the 30S ribosomal subunit.</text>
</comment>
<comment type="subcellular location">
    <subcellularLocation>
        <location>Plastid</location>
    </subcellularLocation>
</comment>
<comment type="similarity">
    <text evidence="3">Belongs to the universal ribosomal protein uS12 family.</text>
</comment>
<accession>Q9TJR0</accession>
<sequence length="124" mass="13870">MPTFQQLVRSARKPHAKKTKSPALQGCPQRRGVCTRVYTTTPKKPNSALRKVARVRLSSKFEITAYIPGIGHNLQEHSVVLVRGGRVKDLPGVRYHIVRGSLDSIGVKNRNQSRSKYGVKRPKS</sequence>
<reference key="1">
    <citation type="journal article" date="2002" name="Mol. Genet. Genomics">
        <title>The genes encoding subunits of ATP synthase are conserved in the reduced plastid genome of the heterotrophic alga Prototheca wickerhamii.</title>
        <authorList>
            <person name="Knauf U."/>
            <person name="Hachtel W."/>
        </authorList>
    </citation>
    <scope>NUCLEOTIDE SEQUENCE [GENOMIC DNA]</scope>
    <source>
        <strain>263-11</strain>
    </source>
</reference>
<gene>
    <name type="primary">rps12</name>
</gene>
<feature type="chain" id="PRO_0000146422" description="Small ribosomal subunit protein uS12c">
    <location>
        <begin position="1"/>
        <end position="124"/>
    </location>
</feature>
<feature type="region of interest" description="Disordered" evidence="2">
    <location>
        <begin position="1"/>
        <end position="28"/>
    </location>
</feature>
<feature type="compositionally biased region" description="Basic residues" evidence="2">
    <location>
        <begin position="10"/>
        <end position="20"/>
    </location>
</feature>
<evidence type="ECO:0000250" key="1"/>
<evidence type="ECO:0000256" key="2">
    <source>
        <dbReference type="SAM" id="MobiDB-lite"/>
    </source>
</evidence>
<evidence type="ECO:0000305" key="3"/>
<geneLocation type="non-photosynthetic plastid"/>
<keyword id="KW-0934">Plastid</keyword>
<keyword id="KW-0687">Ribonucleoprotein</keyword>
<keyword id="KW-0689">Ribosomal protein</keyword>
<keyword id="KW-0694">RNA-binding</keyword>
<keyword id="KW-0699">rRNA-binding</keyword>
<dbReference type="EMBL" id="AJ245645">
    <property type="protein sequence ID" value="CAB53111.1"/>
    <property type="molecule type" value="Genomic_DNA"/>
</dbReference>
<dbReference type="SMR" id="Q9TJR0"/>
<dbReference type="GO" id="GO:0009536">
    <property type="term" value="C:plastid"/>
    <property type="evidence" value="ECO:0007669"/>
    <property type="project" value="UniProtKB-SubCell"/>
</dbReference>
<dbReference type="GO" id="GO:0015935">
    <property type="term" value="C:small ribosomal subunit"/>
    <property type="evidence" value="ECO:0007669"/>
    <property type="project" value="InterPro"/>
</dbReference>
<dbReference type="GO" id="GO:0019843">
    <property type="term" value="F:rRNA binding"/>
    <property type="evidence" value="ECO:0007669"/>
    <property type="project" value="UniProtKB-KW"/>
</dbReference>
<dbReference type="GO" id="GO:0003735">
    <property type="term" value="F:structural constituent of ribosome"/>
    <property type="evidence" value="ECO:0007669"/>
    <property type="project" value="InterPro"/>
</dbReference>
<dbReference type="GO" id="GO:0006412">
    <property type="term" value="P:translation"/>
    <property type="evidence" value="ECO:0007669"/>
    <property type="project" value="InterPro"/>
</dbReference>
<dbReference type="CDD" id="cd03368">
    <property type="entry name" value="Ribosomal_S12"/>
    <property type="match status" value="1"/>
</dbReference>
<dbReference type="FunFam" id="2.40.50.140:FF:000001">
    <property type="entry name" value="30S ribosomal protein S12"/>
    <property type="match status" value="1"/>
</dbReference>
<dbReference type="Gene3D" id="2.40.50.140">
    <property type="entry name" value="Nucleic acid-binding proteins"/>
    <property type="match status" value="1"/>
</dbReference>
<dbReference type="HAMAP" id="MF_00403_B">
    <property type="entry name" value="Ribosomal_uS12_B"/>
    <property type="match status" value="1"/>
</dbReference>
<dbReference type="InterPro" id="IPR012340">
    <property type="entry name" value="NA-bd_OB-fold"/>
</dbReference>
<dbReference type="InterPro" id="IPR006032">
    <property type="entry name" value="Ribosomal_uS12"/>
</dbReference>
<dbReference type="InterPro" id="IPR005679">
    <property type="entry name" value="Ribosomal_uS12_bac"/>
</dbReference>
<dbReference type="NCBIfam" id="TIGR00981">
    <property type="entry name" value="rpsL_bact"/>
    <property type="match status" value="1"/>
</dbReference>
<dbReference type="PANTHER" id="PTHR11652">
    <property type="entry name" value="30S RIBOSOMAL PROTEIN S12 FAMILY MEMBER"/>
    <property type="match status" value="1"/>
</dbReference>
<dbReference type="Pfam" id="PF00164">
    <property type="entry name" value="Ribosom_S12_S23"/>
    <property type="match status" value="1"/>
</dbReference>
<dbReference type="PIRSF" id="PIRSF002133">
    <property type="entry name" value="Ribosomal_S12/S23"/>
    <property type="match status" value="1"/>
</dbReference>
<dbReference type="PRINTS" id="PR01034">
    <property type="entry name" value="RIBOSOMALS12"/>
</dbReference>
<dbReference type="SUPFAM" id="SSF50249">
    <property type="entry name" value="Nucleic acid-binding proteins"/>
    <property type="match status" value="1"/>
</dbReference>
<dbReference type="PROSITE" id="PS00055">
    <property type="entry name" value="RIBOSOMAL_S12"/>
    <property type="match status" value="1"/>
</dbReference>
<name>RR12_PROWI</name>
<proteinExistence type="inferred from homology"/>
<organism>
    <name type="scientific">Prototheca wickerhamii</name>
    <dbReference type="NCBI Taxonomy" id="3111"/>
    <lineage>
        <taxon>Eukaryota</taxon>
        <taxon>Viridiplantae</taxon>
        <taxon>Chlorophyta</taxon>
        <taxon>core chlorophytes</taxon>
        <taxon>Trebouxiophyceae</taxon>
        <taxon>Chlorellales</taxon>
        <taxon>Chlorellaceae</taxon>
        <taxon>Prototheca</taxon>
    </lineage>
</organism>
<protein>
    <recommendedName>
        <fullName evidence="3">Small ribosomal subunit protein uS12c</fullName>
    </recommendedName>
    <alternativeName>
        <fullName>Plastid 30S ribosomal protein S12</fullName>
    </alternativeName>
</protein>